<gene>
    <name evidence="1" type="primary">pyrF</name>
    <name type="ordered locus">spyM18_0959</name>
</gene>
<evidence type="ECO:0000255" key="1">
    <source>
        <dbReference type="HAMAP-Rule" id="MF_01200"/>
    </source>
</evidence>
<reference key="1">
    <citation type="journal article" date="2002" name="Proc. Natl. Acad. Sci. U.S.A.">
        <title>Genome sequence and comparative microarray analysis of serotype M18 group A Streptococcus strains associated with acute rheumatic fever outbreaks.</title>
        <authorList>
            <person name="Smoot J.C."/>
            <person name="Barbian K.D."/>
            <person name="Van Gompel J.J."/>
            <person name="Smoot L.M."/>
            <person name="Chaussee M.S."/>
            <person name="Sylva G.L."/>
            <person name="Sturdevant D.E."/>
            <person name="Ricklefs S.M."/>
            <person name="Porcella S.F."/>
            <person name="Parkins L.D."/>
            <person name="Beres S.B."/>
            <person name="Campbell D.S."/>
            <person name="Smith T.M."/>
            <person name="Zhang Q."/>
            <person name="Kapur V."/>
            <person name="Daly J.A."/>
            <person name="Veasy L.G."/>
            <person name="Musser J.M."/>
        </authorList>
    </citation>
    <scope>NUCLEOTIDE SEQUENCE [LARGE SCALE GENOMIC DNA]</scope>
    <source>
        <strain>MGAS8232</strain>
    </source>
</reference>
<keyword id="KW-0210">Decarboxylase</keyword>
<keyword id="KW-0456">Lyase</keyword>
<keyword id="KW-0665">Pyrimidine biosynthesis</keyword>
<comment type="function">
    <text evidence="1">Catalyzes the decarboxylation of orotidine 5'-monophosphate (OMP) to uridine 5'-monophosphate (UMP).</text>
</comment>
<comment type="catalytic activity">
    <reaction evidence="1">
        <text>orotidine 5'-phosphate + H(+) = UMP + CO2</text>
        <dbReference type="Rhea" id="RHEA:11596"/>
        <dbReference type="ChEBI" id="CHEBI:15378"/>
        <dbReference type="ChEBI" id="CHEBI:16526"/>
        <dbReference type="ChEBI" id="CHEBI:57538"/>
        <dbReference type="ChEBI" id="CHEBI:57865"/>
        <dbReference type="EC" id="4.1.1.23"/>
    </reaction>
</comment>
<comment type="pathway">
    <text evidence="1">Pyrimidine metabolism; UMP biosynthesis via de novo pathway; UMP from orotate: step 2/2.</text>
</comment>
<comment type="subunit">
    <text evidence="1">Homodimer.</text>
</comment>
<comment type="similarity">
    <text evidence="1">Belongs to the OMP decarboxylase family. Type 1 subfamily.</text>
</comment>
<organism>
    <name type="scientific">Streptococcus pyogenes serotype M18 (strain MGAS8232)</name>
    <dbReference type="NCBI Taxonomy" id="186103"/>
    <lineage>
        <taxon>Bacteria</taxon>
        <taxon>Bacillati</taxon>
        <taxon>Bacillota</taxon>
        <taxon>Bacilli</taxon>
        <taxon>Lactobacillales</taxon>
        <taxon>Streptococcaceae</taxon>
        <taxon>Streptococcus</taxon>
    </lineage>
</organism>
<accession>Q8P1C0</accession>
<name>PYRF_STRP8</name>
<sequence length="230" mass="25134">MKEERPIIALDFSSFEETKAFLDLFPAEEKLYVKIGMELYYAQGPDIVRYIKSLGHNVFLDLKLHDIPNTVRAAMAVLKELDIDMATVHAAGGVEMLKAAREGLGQDPTLIAVTQLTSTSEDQMRGDQNIQTSLLESVLHYSKGAAKAQLDGVVCSAQEVEAIKAVTPTGFTCLTPGIRPKGSNIGDQKRVMTPNQARRIESDYIVVGRPITQAKDPVAAYQAIKAEWAG</sequence>
<protein>
    <recommendedName>
        <fullName evidence="1">Orotidine 5'-phosphate decarboxylase</fullName>
        <ecNumber evidence="1">4.1.1.23</ecNumber>
    </recommendedName>
    <alternativeName>
        <fullName evidence="1">OMP decarboxylase</fullName>
        <shortName evidence="1">OMPDCase</shortName>
        <shortName evidence="1">OMPdecase</shortName>
    </alternativeName>
</protein>
<dbReference type="EC" id="4.1.1.23" evidence="1"/>
<dbReference type="EMBL" id="AE009949">
    <property type="protein sequence ID" value="AAL97600.1"/>
    <property type="molecule type" value="Genomic_DNA"/>
</dbReference>
<dbReference type="RefSeq" id="WP_011017686.1">
    <property type="nucleotide sequence ID" value="NC_003485.1"/>
</dbReference>
<dbReference type="SMR" id="Q8P1C0"/>
<dbReference type="KEGG" id="spm:spyM18_0959"/>
<dbReference type="HOGENOM" id="CLU_067069_1_1_9"/>
<dbReference type="UniPathway" id="UPA00070">
    <property type="reaction ID" value="UER00120"/>
</dbReference>
<dbReference type="GO" id="GO:0005829">
    <property type="term" value="C:cytosol"/>
    <property type="evidence" value="ECO:0007669"/>
    <property type="project" value="TreeGrafter"/>
</dbReference>
<dbReference type="GO" id="GO:0004590">
    <property type="term" value="F:orotidine-5'-phosphate decarboxylase activity"/>
    <property type="evidence" value="ECO:0007669"/>
    <property type="project" value="UniProtKB-UniRule"/>
</dbReference>
<dbReference type="GO" id="GO:0006207">
    <property type="term" value="P:'de novo' pyrimidine nucleobase biosynthetic process"/>
    <property type="evidence" value="ECO:0007669"/>
    <property type="project" value="InterPro"/>
</dbReference>
<dbReference type="GO" id="GO:0044205">
    <property type="term" value="P:'de novo' UMP biosynthetic process"/>
    <property type="evidence" value="ECO:0007669"/>
    <property type="project" value="UniProtKB-UniRule"/>
</dbReference>
<dbReference type="CDD" id="cd04725">
    <property type="entry name" value="OMP_decarboxylase_like"/>
    <property type="match status" value="1"/>
</dbReference>
<dbReference type="FunFam" id="3.20.20.70:FF:000015">
    <property type="entry name" value="Orotidine 5'-phosphate decarboxylase"/>
    <property type="match status" value="1"/>
</dbReference>
<dbReference type="Gene3D" id="3.20.20.70">
    <property type="entry name" value="Aldolase class I"/>
    <property type="match status" value="1"/>
</dbReference>
<dbReference type="HAMAP" id="MF_01200_B">
    <property type="entry name" value="OMPdecase_type1_B"/>
    <property type="match status" value="1"/>
</dbReference>
<dbReference type="InterPro" id="IPR013785">
    <property type="entry name" value="Aldolase_TIM"/>
</dbReference>
<dbReference type="InterPro" id="IPR014732">
    <property type="entry name" value="OMPdecase"/>
</dbReference>
<dbReference type="InterPro" id="IPR018089">
    <property type="entry name" value="OMPdecase_AS"/>
</dbReference>
<dbReference type="InterPro" id="IPR047596">
    <property type="entry name" value="OMPdecase_bac"/>
</dbReference>
<dbReference type="InterPro" id="IPR001754">
    <property type="entry name" value="OMPdeCOase_dom"/>
</dbReference>
<dbReference type="InterPro" id="IPR011060">
    <property type="entry name" value="RibuloseP-bd_barrel"/>
</dbReference>
<dbReference type="NCBIfam" id="NF001273">
    <property type="entry name" value="PRK00230.1"/>
    <property type="match status" value="1"/>
</dbReference>
<dbReference type="NCBIfam" id="TIGR01740">
    <property type="entry name" value="pyrF"/>
    <property type="match status" value="1"/>
</dbReference>
<dbReference type="PANTHER" id="PTHR32119">
    <property type="entry name" value="OROTIDINE 5'-PHOSPHATE DECARBOXYLASE"/>
    <property type="match status" value="1"/>
</dbReference>
<dbReference type="PANTHER" id="PTHR32119:SF2">
    <property type="entry name" value="OROTIDINE 5'-PHOSPHATE DECARBOXYLASE"/>
    <property type="match status" value="1"/>
</dbReference>
<dbReference type="Pfam" id="PF00215">
    <property type="entry name" value="OMPdecase"/>
    <property type="match status" value="1"/>
</dbReference>
<dbReference type="SMART" id="SM00934">
    <property type="entry name" value="OMPdecase"/>
    <property type="match status" value="1"/>
</dbReference>
<dbReference type="SUPFAM" id="SSF51366">
    <property type="entry name" value="Ribulose-phoshate binding barrel"/>
    <property type="match status" value="1"/>
</dbReference>
<dbReference type="PROSITE" id="PS00156">
    <property type="entry name" value="OMPDECASE"/>
    <property type="match status" value="1"/>
</dbReference>
<feature type="chain" id="PRO_0000134592" description="Orotidine 5'-phosphate decarboxylase">
    <location>
        <begin position="1"/>
        <end position="230"/>
    </location>
</feature>
<feature type="active site" description="Proton donor" evidence="1">
    <location>
        <position position="63"/>
    </location>
</feature>
<feature type="binding site" evidence="1">
    <location>
        <position position="11"/>
    </location>
    <ligand>
        <name>substrate</name>
    </ligand>
</feature>
<feature type="binding site" evidence="1">
    <location>
        <position position="34"/>
    </location>
    <ligand>
        <name>substrate</name>
    </ligand>
</feature>
<feature type="binding site" evidence="1">
    <location>
        <begin position="61"/>
        <end position="70"/>
    </location>
    <ligand>
        <name>substrate</name>
    </ligand>
</feature>
<feature type="binding site" evidence="1">
    <location>
        <position position="117"/>
    </location>
    <ligand>
        <name>substrate</name>
    </ligand>
</feature>
<feature type="binding site" evidence="1">
    <location>
        <position position="179"/>
    </location>
    <ligand>
        <name>substrate</name>
    </ligand>
</feature>
<feature type="binding site" evidence="1">
    <location>
        <position position="188"/>
    </location>
    <ligand>
        <name>substrate</name>
    </ligand>
</feature>
<feature type="binding site" evidence="1">
    <location>
        <position position="208"/>
    </location>
    <ligand>
        <name>substrate</name>
    </ligand>
</feature>
<feature type="binding site" evidence="1">
    <location>
        <position position="209"/>
    </location>
    <ligand>
        <name>substrate</name>
    </ligand>
</feature>
<proteinExistence type="inferred from homology"/>